<name>NUOB_PARXL</name>
<proteinExistence type="inferred from homology"/>
<dbReference type="EC" id="7.1.1.-" evidence="2"/>
<dbReference type="EMBL" id="CP000270">
    <property type="protein sequence ID" value="ABE29767.1"/>
    <property type="molecule type" value="Genomic_DNA"/>
</dbReference>
<dbReference type="RefSeq" id="WP_006052903.1">
    <property type="nucleotide sequence ID" value="NZ_CP008760.1"/>
</dbReference>
<dbReference type="SMR" id="Q142H2"/>
<dbReference type="STRING" id="266265.Bxe_A3213"/>
<dbReference type="KEGG" id="bxb:DR64_915"/>
<dbReference type="KEGG" id="bxe:Bxe_A3213"/>
<dbReference type="eggNOG" id="COG0377">
    <property type="taxonomic scope" value="Bacteria"/>
</dbReference>
<dbReference type="OrthoDB" id="9786737at2"/>
<dbReference type="Proteomes" id="UP000001817">
    <property type="component" value="Chromosome 1"/>
</dbReference>
<dbReference type="GO" id="GO:0005886">
    <property type="term" value="C:plasma membrane"/>
    <property type="evidence" value="ECO:0007669"/>
    <property type="project" value="UniProtKB-SubCell"/>
</dbReference>
<dbReference type="GO" id="GO:0045271">
    <property type="term" value="C:respiratory chain complex I"/>
    <property type="evidence" value="ECO:0007669"/>
    <property type="project" value="TreeGrafter"/>
</dbReference>
<dbReference type="GO" id="GO:0051539">
    <property type="term" value="F:4 iron, 4 sulfur cluster binding"/>
    <property type="evidence" value="ECO:0007669"/>
    <property type="project" value="UniProtKB-KW"/>
</dbReference>
<dbReference type="GO" id="GO:0005506">
    <property type="term" value="F:iron ion binding"/>
    <property type="evidence" value="ECO:0007669"/>
    <property type="project" value="UniProtKB-UniRule"/>
</dbReference>
<dbReference type="GO" id="GO:0008137">
    <property type="term" value="F:NADH dehydrogenase (ubiquinone) activity"/>
    <property type="evidence" value="ECO:0007669"/>
    <property type="project" value="InterPro"/>
</dbReference>
<dbReference type="GO" id="GO:0050136">
    <property type="term" value="F:NADH:ubiquinone reductase (non-electrogenic) activity"/>
    <property type="evidence" value="ECO:0007669"/>
    <property type="project" value="UniProtKB-UniRule"/>
</dbReference>
<dbReference type="GO" id="GO:0048038">
    <property type="term" value="F:quinone binding"/>
    <property type="evidence" value="ECO:0007669"/>
    <property type="project" value="UniProtKB-KW"/>
</dbReference>
<dbReference type="GO" id="GO:0009060">
    <property type="term" value="P:aerobic respiration"/>
    <property type="evidence" value="ECO:0007669"/>
    <property type="project" value="TreeGrafter"/>
</dbReference>
<dbReference type="GO" id="GO:0015990">
    <property type="term" value="P:electron transport coupled proton transport"/>
    <property type="evidence" value="ECO:0007669"/>
    <property type="project" value="TreeGrafter"/>
</dbReference>
<dbReference type="FunFam" id="3.40.50.12280:FF:000001">
    <property type="entry name" value="NADH-quinone oxidoreductase subunit B 2"/>
    <property type="match status" value="1"/>
</dbReference>
<dbReference type="Gene3D" id="3.40.50.12280">
    <property type="match status" value="1"/>
</dbReference>
<dbReference type="HAMAP" id="MF_01356">
    <property type="entry name" value="NDH1_NuoB"/>
    <property type="match status" value="1"/>
</dbReference>
<dbReference type="InterPro" id="IPR006137">
    <property type="entry name" value="NADH_UbQ_OxRdtase-like_20kDa"/>
</dbReference>
<dbReference type="InterPro" id="IPR006138">
    <property type="entry name" value="NADH_UQ_OxRdtase_20Kd_su"/>
</dbReference>
<dbReference type="NCBIfam" id="TIGR01957">
    <property type="entry name" value="nuoB_fam"/>
    <property type="match status" value="1"/>
</dbReference>
<dbReference type="NCBIfam" id="NF005012">
    <property type="entry name" value="PRK06411.1"/>
    <property type="match status" value="1"/>
</dbReference>
<dbReference type="PANTHER" id="PTHR11995">
    <property type="entry name" value="NADH DEHYDROGENASE"/>
    <property type="match status" value="1"/>
</dbReference>
<dbReference type="PANTHER" id="PTHR11995:SF14">
    <property type="entry name" value="NADH DEHYDROGENASE [UBIQUINONE] IRON-SULFUR PROTEIN 7, MITOCHONDRIAL"/>
    <property type="match status" value="1"/>
</dbReference>
<dbReference type="Pfam" id="PF01058">
    <property type="entry name" value="Oxidored_q6"/>
    <property type="match status" value="1"/>
</dbReference>
<dbReference type="SUPFAM" id="SSF56770">
    <property type="entry name" value="HydA/Nqo6-like"/>
    <property type="match status" value="1"/>
</dbReference>
<dbReference type="PROSITE" id="PS01150">
    <property type="entry name" value="COMPLEX1_20K"/>
    <property type="match status" value="1"/>
</dbReference>
<comment type="function">
    <text evidence="1">NDH-1 shuttles electrons from NADH, via FMN and iron-sulfur (Fe-S) centers, to quinones in the respiratory chain. Couples the redox reaction to proton translocation (for every two electrons transferred, four hydrogen ions are translocated across the cytoplasmic membrane), and thus conserves the redox energy in a proton gradient (By similarity).</text>
</comment>
<comment type="catalytic activity">
    <reaction evidence="2">
        <text>a quinone + NADH + 5 H(+)(in) = a quinol + NAD(+) + 4 H(+)(out)</text>
        <dbReference type="Rhea" id="RHEA:57888"/>
        <dbReference type="ChEBI" id="CHEBI:15378"/>
        <dbReference type="ChEBI" id="CHEBI:24646"/>
        <dbReference type="ChEBI" id="CHEBI:57540"/>
        <dbReference type="ChEBI" id="CHEBI:57945"/>
        <dbReference type="ChEBI" id="CHEBI:132124"/>
    </reaction>
</comment>
<comment type="cofactor">
    <cofactor evidence="2">
        <name>[4Fe-4S] cluster</name>
        <dbReference type="ChEBI" id="CHEBI:49883"/>
    </cofactor>
    <text evidence="2">Binds 1 [4Fe-4S] cluster.</text>
</comment>
<comment type="subunit">
    <text evidence="2">NDH-1 is composed of 14 different subunits. Subunits NuoB, C, D, E, F, and G constitute the peripheral sector of the complex.</text>
</comment>
<comment type="subcellular location">
    <subcellularLocation>
        <location evidence="2">Cell inner membrane</location>
        <topology evidence="2">Peripheral membrane protein</topology>
        <orientation evidence="2">Cytoplasmic side</orientation>
    </subcellularLocation>
</comment>
<comment type="similarity">
    <text evidence="2">Belongs to the complex I 20 kDa subunit family.</text>
</comment>
<organism>
    <name type="scientific">Paraburkholderia xenovorans (strain LB400)</name>
    <dbReference type="NCBI Taxonomy" id="266265"/>
    <lineage>
        <taxon>Bacteria</taxon>
        <taxon>Pseudomonadati</taxon>
        <taxon>Pseudomonadota</taxon>
        <taxon>Betaproteobacteria</taxon>
        <taxon>Burkholderiales</taxon>
        <taxon>Burkholderiaceae</taxon>
        <taxon>Paraburkholderia</taxon>
    </lineage>
</organism>
<reference key="1">
    <citation type="journal article" date="2006" name="Proc. Natl. Acad. Sci. U.S.A.">
        <title>Burkholderia xenovorans LB400 harbors a multi-replicon, 9.73-Mbp genome shaped for versatility.</title>
        <authorList>
            <person name="Chain P.S.G."/>
            <person name="Denef V.J."/>
            <person name="Konstantinidis K.T."/>
            <person name="Vergez L.M."/>
            <person name="Agullo L."/>
            <person name="Reyes V.L."/>
            <person name="Hauser L."/>
            <person name="Cordova M."/>
            <person name="Gomez L."/>
            <person name="Gonzalez M."/>
            <person name="Land M."/>
            <person name="Lao V."/>
            <person name="Larimer F."/>
            <person name="LiPuma J.J."/>
            <person name="Mahenthiralingam E."/>
            <person name="Malfatti S.A."/>
            <person name="Marx C.J."/>
            <person name="Parnell J.J."/>
            <person name="Ramette A."/>
            <person name="Richardson P."/>
            <person name="Seeger M."/>
            <person name="Smith D."/>
            <person name="Spilker T."/>
            <person name="Sul W.J."/>
            <person name="Tsoi T.V."/>
            <person name="Ulrich L.E."/>
            <person name="Zhulin I.B."/>
            <person name="Tiedje J.M."/>
        </authorList>
    </citation>
    <scope>NUCLEOTIDE SEQUENCE [LARGE SCALE GENOMIC DNA]</scope>
    <source>
        <strain>LB400</strain>
    </source>
</reference>
<keyword id="KW-0004">4Fe-4S</keyword>
<keyword id="KW-0997">Cell inner membrane</keyword>
<keyword id="KW-1003">Cell membrane</keyword>
<keyword id="KW-0408">Iron</keyword>
<keyword id="KW-0411">Iron-sulfur</keyword>
<keyword id="KW-0472">Membrane</keyword>
<keyword id="KW-0479">Metal-binding</keyword>
<keyword id="KW-0520">NAD</keyword>
<keyword id="KW-0874">Quinone</keyword>
<keyword id="KW-1185">Reference proteome</keyword>
<keyword id="KW-1278">Translocase</keyword>
<keyword id="KW-0813">Transport</keyword>
<keyword id="KW-0830">Ubiquinone</keyword>
<gene>
    <name evidence="2" type="primary">nuoB</name>
    <name type="ordered locus">Bxeno_A1229</name>
    <name type="ORF">Bxe_A3213</name>
</gene>
<evidence type="ECO:0000250" key="1"/>
<evidence type="ECO:0000255" key="2">
    <source>
        <dbReference type="HAMAP-Rule" id="MF_01356"/>
    </source>
</evidence>
<accession>Q142H2</accession>
<protein>
    <recommendedName>
        <fullName evidence="2">NADH-quinone oxidoreductase subunit B</fullName>
        <ecNumber evidence="2">7.1.1.-</ecNumber>
    </recommendedName>
    <alternativeName>
        <fullName evidence="2">NADH dehydrogenase I subunit B</fullName>
    </alternativeName>
    <alternativeName>
        <fullName evidence="2">NDH-1 subunit B</fullName>
    </alternativeName>
</protein>
<feature type="chain" id="PRO_0000358391" description="NADH-quinone oxidoreductase subunit B">
    <location>
        <begin position="1"/>
        <end position="159"/>
    </location>
</feature>
<feature type="binding site" evidence="2">
    <location>
        <position position="37"/>
    </location>
    <ligand>
        <name>[4Fe-4S] cluster</name>
        <dbReference type="ChEBI" id="CHEBI:49883"/>
    </ligand>
</feature>
<feature type="binding site" evidence="2">
    <location>
        <position position="38"/>
    </location>
    <ligand>
        <name>[4Fe-4S] cluster</name>
        <dbReference type="ChEBI" id="CHEBI:49883"/>
    </ligand>
</feature>
<feature type="binding site" evidence="2">
    <location>
        <position position="102"/>
    </location>
    <ligand>
        <name>[4Fe-4S] cluster</name>
        <dbReference type="ChEBI" id="CHEBI:49883"/>
    </ligand>
</feature>
<feature type="binding site" evidence="2">
    <location>
        <position position="132"/>
    </location>
    <ligand>
        <name>[4Fe-4S] cluster</name>
        <dbReference type="ChEBI" id="CHEBI:49883"/>
    </ligand>
</feature>
<sequence length="159" mass="17532">MSIEGVLKEGFVTTTADKLINWTRTGSLWPMTFGLACCAVEMMHAGAARYDLDRFGVVFRPSPRQSDVMIVAGTLCNKMAPALRKVYDQMAEPRWVISMGSCANGGGYYHYSYSVVRGCDRIVPVDVYVPGCPPTAEALVYGVIQLQAKIRRTNTIARQ</sequence>